<reference key="1">
    <citation type="journal article" date="1990" name="J. Virol.">
        <title>Multigene families in African swine fever virus: family 360.</title>
        <authorList>
            <person name="Gonzalez A."/>
            <person name="Calvo V."/>
            <person name="Almazan F."/>
            <person name="Almendral J.M."/>
            <person name="Ramirez J.C."/>
            <person name="de la Vega I."/>
            <person name="Blasco R."/>
            <person name="Vinuela E."/>
        </authorList>
    </citation>
    <scope>NUCLEOTIDE SEQUENCE [GENOMIC DNA]</scope>
</reference>
<reference key="2">
    <citation type="journal article" date="1995" name="Virology">
        <title>Analysis of the complete nucleotide sequence of African swine fever virus.</title>
        <authorList>
            <person name="Yanez R.J."/>
            <person name="Rodriguez J.M."/>
            <person name="Nogal M.L."/>
            <person name="Yuste L."/>
            <person name="Enriquez C."/>
            <person name="Rodriguez J.F."/>
            <person name="Vinuela E."/>
        </authorList>
    </citation>
    <scope>NUCLEOTIDE SEQUENCE [LARGE SCALE GENOMIC DNA]</scope>
</reference>
<reference key="3">
    <citation type="submission" date="2014-10" db="EMBL/GenBank/DDBJ databases">
        <authorList>
            <person name="Rodriguez J.M."/>
            <person name="Salas M.L."/>
        </authorList>
    </citation>
    <scope>SEQUENCE REVISION</scope>
</reference>
<reference key="4">
    <citation type="journal article" date="2001" name="J. Virol.">
        <title>African swine fever virus multigene family 360 and 530 genes are novel macrophage host range determinants.</title>
        <authorList>
            <person name="Zsak L."/>
            <person name="Lu Z."/>
            <person name="Burrage T.G."/>
            <person name="Neilan J.G."/>
            <person name="Kutish G.F."/>
            <person name="Moore D.M."/>
            <person name="Rock D.L."/>
        </authorList>
    </citation>
    <scope>FUNCTION</scope>
</reference>
<reference key="5">
    <citation type="journal article" date="2004" name="J. Virol.">
        <title>African swine fever virus multigene family 360 and 530 genes affect host interferon response.</title>
        <authorList>
            <person name="Afonso C.L."/>
            <person name="Piccone M.E."/>
            <person name="Zaffuto K.M."/>
            <person name="Neilan J."/>
            <person name="Kutish G.F."/>
            <person name="Lu Z."/>
            <person name="Balinsky C.A."/>
            <person name="Gibb T.R."/>
            <person name="Bean T.J."/>
            <person name="Zsak L."/>
            <person name="Rock D.L."/>
        </authorList>
    </citation>
    <scope>FUNCTION</scope>
</reference>
<reference key="6">
    <citation type="journal article" date="2004" name="J. Virol.">
        <title>African swine fever virus multigene family 360 genes affect virus replication and generalization of infection in Ornithodoros porcinus ticks.</title>
        <authorList>
            <person name="Burrage T.G."/>
            <person name="Lu Z."/>
            <person name="Neilan J.G."/>
            <person name="Rock D.L."/>
            <person name="Zsak L."/>
        </authorList>
    </citation>
    <scope>FUNCTION</scope>
</reference>
<reference key="7">
    <citation type="journal article" date="2020" name="Viruses">
        <title>Evaluation in Swine of a Recombinant African Swine Fever Virus Lacking the MGF-360-1L Gene.</title>
        <authorList>
            <person name="Ramirez-Medina E."/>
            <person name="Vuono E.A."/>
            <person name="Rai A."/>
            <person name="Pruitt S."/>
            <person name="Silva E."/>
            <person name="Velazquez-Salinas L."/>
            <person name="Zhu J."/>
            <person name="Gladue D.P."/>
            <person name="Borca M.V."/>
        </authorList>
    </citation>
    <scope>DISRUPTION PHENOTYPE</scope>
    <source>
        <strain>Georgia 2007/1</strain>
    </source>
</reference>
<reference key="8">
    <citation type="journal article" date="2020" name="J. Virol.">
        <title>The African Swine Fever Virus Transcriptome.</title>
        <authorList>
            <person name="Cackett G."/>
            <person name="Matelska D."/>
            <person name="Sykora M."/>
            <person name="Portugal R."/>
            <person name="Malecki M."/>
            <person name="Baehler J."/>
            <person name="Dixon L."/>
            <person name="Werner F."/>
        </authorList>
    </citation>
    <scope>INDUCTION</scope>
</reference>
<organism>
    <name type="scientific">African swine fever virus (strain Badajoz 1971 Vero-adapted)</name>
    <name type="common">Ba71V</name>
    <name type="synonym">ASFV</name>
    <dbReference type="NCBI Taxonomy" id="10498"/>
    <lineage>
        <taxon>Viruses</taxon>
        <taxon>Varidnaviria</taxon>
        <taxon>Bamfordvirae</taxon>
        <taxon>Nucleocytoviricota</taxon>
        <taxon>Pokkesviricetes</taxon>
        <taxon>Asfuvirales</taxon>
        <taxon>Asfarviridae</taxon>
        <taxon>Asfivirus</taxon>
        <taxon>African swine fever virus</taxon>
    </lineage>
</organism>
<accession>P23167</accession>
<gene>
    <name type="ordered locus">BA71V-003</name>
    <name type="ORF">KP360L</name>
</gene>
<proteinExistence type="evidence at transcript level"/>
<sequence>MPSTLQALTKKVLATQPVFKDDYCILERCGLWWHEAPITIHHTCIDKQILIKTASFKHGLTLNVALMKAVQENNHGLIELFTEWGADISFGLVTVNMECTQDLCQKLGARKALSENKILEIFYNVQYVKTSSNIILCHELLSDNPLFLNNAQLKLRIFGELDTLSINFTLDNISFNEMLTRYWYSMAILYKLTEAIQYFYQRYSHFKDWRLICGVAYNNVFDLHEIYNKEKTNIDIDEMMQLACMYDCNYTTIYYCCMLGADINRAMITSVMNFCEGNLFLCIDLGADAFEESMEIASQTNNWILINILLFKNYSPDSSLLSIKTTDPEKINALLDEEKYKSKNMLIYEESLFHIYGVNI</sequence>
<organismHost>
    <name type="scientific">Ornithodoros</name>
    <name type="common">relapsing fever ticks</name>
    <dbReference type="NCBI Taxonomy" id="6937"/>
</organismHost>
<organismHost>
    <name type="scientific">Sus scrofa</name>
    <name type="common">Pig</name>
    <dbReference type="NCBI Taxonomy" id="9823"/>
</organismHost>
<comment type="function">
    <text evidence="1 2 3">Plays a role in virus cell tropism, and may be required for efficient virus replication in macrophages.</text>
</comment>
<comment type="induction">
    <text evidence="4">Expressed in the early phase of the viral replicative cycle.</text>
</comment>
<comment type="disruption phenotype">
    <text evidence="5">No effect on virulence.</text>
</comment>
<comment type="similarity">
    <text evidence="6">Belongs to the asfivirus MGF 360 family.</text>
</comment>
<name>3601L_ASFB7</name>
<dbReference type="EMBL" id="M57546">
    <property type="protein sequence ID" value="AAA42683.1"/>
    <property type="molecule type" value="Genomic_DNA"/>
</dbReference>
<dbReference type="EMBL" id="U18466">
    <property type="protein sequence ID" value="AAA65238.2"/>
    <property type="molecule type" value="Genomic_DNA"/>
</dbReference>
<dbReference type="PIR" id="C43680">
    <property type="entry name" value="C43680"/>
</dbReference>
<dbReference type="RefSeq" id="NP_042702.2">
    <property type="nucleotide sequence ID" value="NC_001659.2"/>
</dbReference>
<dbReference type="SMR" id="P23167"/>
<dbReference type="GeneID" id="22220392"/>
<dbReference type="KEGG" id="vg:22220392"/>
<dbReference type="Proteomes" id="UP000000624">
    <property type="component" value="Segment"/>
</dbReference>
<dbReference type="GO" id="GO:0042330">
    <property type="term" value="P:taxis"/>
    <property type="evidence" value="ECO:0007669"/>
    <property type="project" value="InterPro"/>
</dbReference>
<dbReference type="InterPro" id="IPR002595">
    <property type="entry name" value="ASFV_MGF360"/>
</dbReference>
<dbReference type="Pfam" id="PF01671">
    <property type="entry name" value="ASFV_360"/>
    <property type="match status" value="1"/>
</dbReference>
<feature type="chain" id="PRO_0000221949" description="Protein MGF 360-1L">
    <location>
        <begin position="1"/>
        <end position="360"/>
    </location>
</feature>
<feature type="sequence conflict" description="In Ref. 1." evidence="6" ref="1">
    <original>R</original>
    <variation>P</variation>
    <location>
        <position position="202"/>
    </location>
</feature>
<feature type="sequence conflict" description="In Ref. 1." evidence="6" ref="1">
    <original>I</original>
    <variation>M</variation>
    <location>
        <position position="283"/>
    </location>
</feature>
<evidence type="ECO:0000269" key="1">
    <source>
    </source>
</evidence>
<evidence type="ECO:0000269" key="2">
    <source>
    </source>
</evidence>
<evidence type="ECO:0000269" key="3">
    <source>
    </source>
</evidence>
<evidence type="ECO:0000269" key="4">
    <source>
    </source>
</evidence>
<evidence type="ECO:0000269" key="5">
    <source>
    </source>
</evidence>
<evidence type="ECO:0000305" key="6"/>
<protein>
    <recommendedName>
        <fullName>Protein MGF 360-1L</fullName>
    </recommendedName>
</protein>
<keyword id="KW-0244">Early protein</keyword>
<keyword id="KW-1185">Reference proteome</keyword>